<organism>
    <name type="scientific">Staphylococcus aureus (strain Mu3 / ATCC 700698)</name>
    <dbReference type="NCBI Taxonomy" id="418127"/>
    <lineage>
        <taxon>Bacteria</taxon>
        <taxon>Bacillati</taxon>
        <taxon>Bacillota</taxon>
        <taxon>Bacilli</taxon>
        <taxon>Bacillales</taxon>
        <taxon>Staphylococcaceae</taxon>
        <taxon>Staphylococcus</taxon>
    </lineage>
</organism>
<gene>
    <name evidence="1" type="primary">ezrA</name>
    <name type="ordered locus">SAHV_1703</name>
</gene>
<reference key="1">
    <citation type="journal article" date="2008" name="Antimicrob. Agents Chemother.">
        <title>Mutated response regulator graR is responsible for phenotypic conversion of Staphylococcus aureus from heterogeneous vancomycin-intermediate resistance to vancomycin-intermediate resistance.</title>
        <authorList>
            <person name="Neoh H.-M."/>
            <person name="Cui L."/>
            <person name="Yuzawa H."/>
            <person name="Takeuchi F."/>
            <person name="Matsuo M."/>
            <person name="Hiramatsu K."/>
        </authorList>
    </citation>
    <scope>NUCLEOTIDE SEQUENCE [LARGE SCALE GENOMIC DNA]</scope>
    <source>
        <strain>Mu3 / ATCC 700698</strain>
    </source>
</reference>
<sequence>MVLYIILAIIVIILIAVGVLFYLRSNKRQIIEKAIERKNEIETLPFDQNLAQLSKLNLKGETKTKYDAMKKDNVESTNKYLAPVEEKIHNAEALLDKFSFNASQSEIDDANELMDSYEQSYQQQLEDVNEIIALYKDNDELYDKCKVDYREMKRDVLANRHQFGEAASLLETEIEKFEPRLEQYEVLKADGNYVQAHNHIAALNEQMKQLRSYMEEIPELIRETQKELPGQFQDLKYGCRDLKVEGYDLDHVKVDSTLQSLKTELSFVEPLISRLELEEANDKLANINDKLDDMYDLIEHEVKAKNDVEETKDIITDNLFKAKDMNYTLQTEIEYVRENYYINESDAQSVRQFENEIQSLISVYDDILKEMSKSAVRYSEVQDNLQYLEDHVTVINDKQEKLQNHLIQLREDEAEAEDNLLRVQSKKEEVYRRLLASNLTSVPERFIIMKNEIDHEVRDVNEQFSERPIHVKQLKDKVSKIVIQMNTFEDEANDVLVNAVYAEKLIQYGNRYRKDYSNVDKSLNEAERLFKNNRYKRAIEIAEQVLESVEPGVTKHIEEEVIKQ</sequence>
<accession>A7X3E7</accession>
<evidence type="ECO:0000255" key="1">
    <source>
        <dbReference type="HAMAP-Rule" id="MF_00728"/>
    </source>
</evidence>
<evidence type="ECO:0007829" key="2">
    <source>
        <dbReference type="PDB" id="4UY3"/>
    </source>
</evidence>
<protein>
    <recommendedName>
        <fullName evidence="1">Septation ring formation regulator EzrA</fullName>
    </recommendedName>
</protein>
<proteinExistence type="evidence at protein level"/>
<dbReference type="EMBL" id="AP009324">
    <property type="protein sequence ID" value="BAF78586.1"/>
    <property type="molecule type" value="Genomic_DNA"/>
</dbReference>
<dbReference type="RefSeq" id="WP_000244866.1">
    <property type="nucleotide sequence ID" value="NC_009782.1"/>
</dbReference>
<dbReference type="PDB" id="4UY3">
    <property type="method" value="X-ray"/>
    <property type="resolution" value="2.60 A"/>
    <property type="chains" value="A=24-214"/>
</dbReference>
<dbReference type="PDBsum" id="4UY3"/>
<dbReference type="SMR" id="A7X3E7"/>
<dbReference type="KEGG" id="saw:SAHV_1703"/>
<dbReference type="HOGENOM" id="CLU_034079_1_0_9"/>
<dbReference type="EvolutionaryTrace" id="A7X3E7"/>
<dbReference type="GO" id="GO:0005886">
    <property type="term" value="C:plasma membrane"/>
    <property type="evidence" value="ECO:0007669"/>
    <property type="project" value="UniProtKB-SubCell"/>
</dbReference>
<dbReference type="GO" id="GO:0005940">
    <property type="term" value="C:septin ring"/>
    <property type="evidence" value="ECO:0007669"/>
    <property type="project" value="InterPro"/>
</dbReference>
<dbReference type="GO" id="GO:0000917">
    <property type="term" value="P:division septum assembly"/>
    <property type="evidence" value="ECO:0007669"/>
    <property type="project" value="UniProtKB-KW"/>
</dbReference>
<dbReference type="GO" id="GO:0000921">
    <property type="term" value="P:septin ring assembly"/>
    <property type="evidence" value="ECO:0007669"/>
    <property type="project" value="InterPro"/>
</dbReference>
<dbReference type="HAMAP" id="MF_00728">
    <property type="entry name" value="EzrA"/>
    <property type="match status" value="1"/>
</dbReference>
<dbReference type="InterPro" id="IPR010379">
    <property type="entry name" value="EzrA"/>
</dbReference>
<dbReference type="NCBIfam" id="NF003412">
    <property type="entry name" value="PRK04778.1-6"/>
    <property type="match status" value="1"/>
</dbReference>
<dbReference type="Pfam" id="PF06160">
    <property type="entry name" value="EzrA"/>
    <property type="match status" value="1"/>
</dbReference>
<comment type="function">
    <text evidence="1">Negative regulator of FtsZ ring formation; modulates the frequency and position of FtsZ ring formation. Inhibits FtsZ ring formation at polar sites. Interacts either with FtsZ or with one of its binding partners to promote depolymerization.</text>
</comment>
<comment type="subcellular location">
    <subcellularLocation>
        <location evidence="1">Cell membrane</location>
        <topology evidence="1">Single-pass membrane protein</topology>
    </subcellularLocation>
    <text evidence="1">Colocalized with FtsZ to the nascent septal site.</text>
</comment>
<comment type="similarity">
    <text evidence="1">Belongs to the EzrA family.</text>
</comment>
<keyword id="KW-0002">3D-structure</keyword>
<keyword id="KW-0131">Cell cycle</keyword>
<keyword id="KW-0132">Cell division</keyword>
<keyword id="KW-1003">Cell membrane</keyword>
<keyword id="KW-0175">Coiled coil</keyword>
<keyword id="KW-0472">Membrane</keyword>
<keyword id="KW-0717">Septation</keyword>
<keyword id="KW-0812">Transmembrane</keyword>
<keyword id="KW-1133">Transmembrane helix</keyword>
<feature type="chain" id="PRO_1000045901" description="Septation ring formation regulator EzrA">
    <location>
        <begin position="1"/>
        <end position="564"/>
    </location>
</feature>
<feature type="topological domain" description="Extracellular" evidence="1">
    <location>
        <begin position="1"/>
        <end position="4"/>
    </location>
</feature>
<feature type="transmembrane region" description="Helical" evidence="1">
    <location>
        <begin position="5"/>
        <end position="23"/>
    </location>
</feature>
<feature type="topological domain" description="Cytoplasmic" evidence="1">
    <location>
        <begin position="24"/>
        <end position="564"/>
    </location>
</feature>
<feature type="coiled-coil region" evidence="1">
    <location>
        <begin position="99"/>
        <end position="138"/>
    </location>
</feature>
<feature type="coiled-coil region" evidence="1">
    <location>
        <begin position="190"/>
        <end position="223"/>
    </location>
</feature>
<feature type="coiled-coil region" evidence="1">
    <location>
        <begin position="271"/>
        <end position="300"/>
    </location>
</feature>
<feature type="coiled-coil region" evidence="1">
    <location>
        <begin position="350"/>
        <end position="435"/>
    </location>
</feature>
<feature type="coiled-coil region" evidence="1">
    <location>
        <begin position="471"/>
        <end position="550"/>
    </location>
</feature>
<feature type="helix" evidence="2">
    <location>
        <begin position="24"/>
        <end position="41"/>
    </location>
</feature>
<feature type="helix" evidence="2">
    <location>
        <begin position="46"/>
        <end position="54"/>
    </location>
</feature>
<feature type="helix" evidence="2">
    <location>
        <begin position="60"/>
        <end position="80"/>
    </location>
</feature>
<feature type="turn" evidence="2">
    <location>
        <begin position="81"/>
        <end position="83"/>
    </location>
</feature>
<feature type="helix" evidence="2">
    <location>
        <begin position="84"/>
        <end position="96"/>
    </location>
</feature>
<feature type="helix" evidence="2">
    <location>
        <begin position="100"/>
        <end position="158"/>
    </location>
</feature>
<feature type="helix" evidence="2">
    <location>
        <begin position="161"/>
        <end position="166"/>
    </location>
</feature>
<feature type="helix" evidence="2">
    <location>
        <begin position="167"/>
        <end position="175"/>
    </location>
</feature>
<feature type="helix" evidence="2">
    <location>
        <begin position="177"/>
        <end position="189"/>
    </location>
</feature>
<feature type="helix" evidence="2">
    <location>
        <begin position="193"/>
        <end position="213"/>
    </location>
</feature>
<name>EZRA_STAA1</name>